<accession>P9WHT7</accession>
<accession>L0TFB8</accession>
<accession>P65801</accession>
<accession>Q50709</accession>
<dbReference type="EC" id="2.3.1.234" evidence="1"/>
<dbReference type="EMBL" id="AL123456">
    <property type="protein sequence ID" value="CCP46241.1"/>
    <property type="molecule type" value="Genomic_DNA"/>
</dbReference>
<dbReference type="PIR" id="H70737">
    <property type="entry name" value="H70737"/>
</dbReference>
<dbReference type="RefSeq" id="NP_217936.1">
    <property type="nucleotide sequence ID" value="NC_000962.3"/>
</dbReference>
<dbReference type="RefSeq" id="WP_003900052.1">
    <property type="nucleotide sequence ID" value="NZ_NVQJ01000027.1"/>
</dbReference>
<dbReference type="SMR" id="P9WHT7"/>
<dbReference type="FunCoup" id="P9WHT7">
    <property type="interactions" value="433"/>
</dbReference>
<dbReference type="STRING" id="83332.Rv3419c"/>
<dbReference type="PaxDb" id="83332-Rv3419c"/>
<dbReference type="GeneID" id="887595"/>
<dbReference type="KEGG" id="mtu:Rv3419c"/>
<dbReference type="KEGG" id="mtv:RVBD_3419c"/>
<dbReference type="TubercuList" id="Rv3419c"/>
<dbReference type="eggNOG" id="COG0533">
    <property type="taxonomic scope" value="Bacteria"/>
</dbReference>
<dbReference type="InParanoid" id="P9WHT7"/>
<dbReference type="OrthoDB" id="9806197at2"/>
<dbReference type="PhylomeDB" id="P9WHT7"/>
<dbReference type="Proteomes" id="UP000001584">
    <property type="component" value="Chromosome"/>
</dbReference>
<dbReference type="GO" id="GO:0005737">
    <property type="term" value="C:cytoplasm"/>
    <property type="evidence" value="ECO:0007669"/>
    <property type="project" value="UniProtKB-SubCell"/>
</dbReference>
<dbReference type="GO" id="GO:0005506">
    <property type="term" value="F:iron ion binding"/>
    <property type="evidence" value="ECO:0007669"/>
    <property type="project" value="UniProtKB-UniRule"/>
</dbReference>
<dbReference type="GO" id="GO:0061711">
    <property type="term" value="F:N(6)-L-threonylcarbamoyladenine synthase activity"/>
    <property type="evidence" value="ECO:0007669"/>
    <property type="project" value="UniProtKB-EC"/>
</dbReference>
<dbReference type="GO" id="GO:0002949">
    <property type="term" value="P:tRNA threonylcarbamoyladenosine modification"/>
    <property type="evidence" value="ECO:0007669"/>
    <property type="project" value="UniProtKB-UniRule"/>
</dbReference>
<dbReference type="CDD" id="cd24133">
    <property type="entry name" value="ASKHA_NBD_TsaD_bac"/>
    <property type="match status" value="1"/>
</dbReference>
<dbReference type="FunFam" id="3.30.420.40:FF:000012">
    <property type="entry name" value="tRNA N6-adenosine threonylcarbamoyltransferase"/>
    <property type="match status" value="1"/>
</dbReference>
<dbReference type="FunFam" id="3.30.420.40:FF:000040">
    <property type="entry name" value="tRNA N6-adenosine threonylcarbamoyltransferase"/>
    <property type="match status" value="1"/>
</dbReference>
<dbReference type="Gene3D" id="3.30.420.40">
    <property type="match status" value="2"/>
</dbReference>
<dbReference type="HAMAP" id="MF_01445">
    <property type="entry name" value="TsaD"/>
    <property type="match status" value="1"/>
</dbReference>
<dbReference type="InterPro" id="IPR043129">
    <property type="entry name" value="ATPase_NBD"/>
</dbReference>
<dbReference type="InterPro" id="IPR000905">
    <property type="entry name" value="Gcp-like_dom"/>
</dbReference>
<dbReference type="InterPro" id="IPR017861">
    <property type="entry name" value="KAE1/TsaD"/>
</dbReference>
<dbReference type="InterPro" id="IPR017860">
    <property type="entry name" value="Peptidase_M22_CS"/>
</dbReference>
<dbReference type="InterPro" id="IPR022450">
    <property type="entry name" value="TsaD"/>
</dbReference>
<dbReference type="NCBIfam" id="TIGR00329">
    <property type="entry name" value="gcp_kae1"/>
    <property type="match status" value="1"/>
</dbReference>
<dbReference type="NCBIfam" id="TIGR03723">
    <property type="entry name" value="T6A_TsaD_YgjD"/>
    <property type="match status" value="1"/>
</dbReference>
<dbReference type="PANTHER" id="PTHR11735">
    <property type="entry name" value="TRNA N6-ADENOSINE THREONYLCARBAMOYLTRANSFERASE"/>
    <property type="match status" value="1"/>
</dbReference>
<dbReference type="PANTHER" id="PTHR11735:SF6">
    <property type="entry name" value="TRNA N6-ADENOSINE THREONYLCARBAMOYLTRANSFERASE, MITOCHONDRIAL"/>
    <property type="match status" value="1"/>
</dbReference>
<dbReference type="Pfam" id="PF00814">
    <property type="entry name" value="TsaD"/>
    <property type="match status" value="1"/>
</dbReference>
<dbReference type="PRINTS" id="PR00789">
    <property type="entry name" value="OSIALOPTASE"/>
</dbReference>
<dbReference type="SUPFAM" id="SSF53067">
    <property type="entry name" value="Actin-like ATPase domain"/>
    <property type="match status" value="2"/>
</dbReference>
<dbReference type="PROSITE" id="PS01016">
    <property type="entry name" value="GLYCOPROTEASE"/>
    <property type="match status" value="1"/>
</dbReference>
<protein>
    <recommendedName>
        <fullName evidence="1">tRNA N6-adenosine threonylcarbamoyltransferase</fullName>
        <ecNumber evidence="1">2.3.1.234</ecNumber>
    </recommendedName>
    <alternativeName>
        <fullName evidence="1">N6-L-threonylcarbamoyladenine synthase</fullName>
        <shortName evidence="1">t(6)A synthase</shortName>
    </alternativeName>
    <alternativeName>
        <fullName evidence="1">t(6)A37 threonylcarbamoyladenosine biosynthesis protein TsaD</fullName>
    </alternativeName>
    <alternativeName>
        <fullName evidence="1">tRNA threonylcarbamoyladenosine biosynthesis protein TsaD</fullName>
    </alternativeName>
</protein>
<comment type="function">
    <text evidence="1">Required for the formation of a threonylcarbamoyl group on adenosine at position 37 (t(6)A37) in tRNAs that read codons beginning with adenine. Is involved in the transfer of the threonylcarbamoyl moiety of threonylcarbamoyl-AMP (TC-AMP) to the N6 group of A37, together with TsaE and TsaB. TsaD likely plays a direct catalytic role in this reaction.</text>
</comment>
<comment type="catalytic activity">
    <reaction evidence="1">
        <text>L-threonylcarbamoyladenylate + adenosine(37) in tRNA = N(6)-L-threonylcarbamoyladenosine(37) in tRNA + AMP + H(+)</text>
        <dbReference type="Rhea" id="RHEA:37059"/>
        <dbReference type="Rhea" id="RHEA-COMP:10162"/>
        <dbReference type="Rhea" id="RHEA-COMP:10163"/>
        <dbReference type="ChEBI" id="CHEBI:15378"/>
        <dbReference type="ChEBI" id="CHEBI:73682"/>
        <dbReference type="ChEBI" id="CHEBI:74411"/>
        <dbReference type="ChEBI" id="CHEBI:74418"/>
        <dbReference type="ChEBI" id="CHEBI:456215"/>
        <dbReference type="EC" id="2.3.1.234"/>
    </reaction>
</comment>
<comment type="cofactor">
    <cofactor evidence="1">
        <name>Fe(2+)</name>
        <dbReference type="ChEBI" id="CHEBI:29033"/>
    </cofactor>
    <text evidence="1">Binds 1 Fe(2+) ion per subunit.</text>
</comment>
<comment type="subunit">
    <text evidence="3">Interacts with RimI.</text>
</comment>
<comment type="subcellular location">
    <subcellularLocation>
        <location evidence="1">Cytoplasm</location>
    </subcellularLocation>
</comment>
<comment type="similarity">
    <text evidence="1">Belongs to the KAE1 / TsaD family.</text>
</comment>
<name>TSAD_MYCTU</name>
<feature type="chain" id="PRO_0000096970" description="tRNA N6-adenosine threonylcarbamoyltransferase">
    <location>
        <begin position="1"/>
        <end position="344"/>
    </location>
</feature>
<feature type="region of interest" description="Disordered" evidence="2">
    <location>
        <begin position="325"/>
        <end position="344"/>
    </location>
</feature>
<feature type="binding site" evidence="1">
    <location>
        <position position="114"/>
    </location>
    <ligand>
        <name>Fe cation</name>
        <dbReference type="ChEBI" id="CHEBI:24875"/>
    </ligand>
</feature>
<feature type="binding site" evidence="1">
    <location>
        <position position="118"/>
    </location>
    <ligand>
        <name>Fe cation</name>
        <dbReference type="ChEBI" id="CHEBI:24875"/>
    </ligand>
</feature>
<feature type="binding site" evidence="1">
    <location>
        <begin position="136"/>
        <end position="140"/>
    </location>
    <ligand>
        <name>substrate</name>
    </ligand>
</feature>
<feature type="binding site" evidence="1">
    <location>
        <position position="170"/>
    </location>
    <ligand>
        <name>substrate</name>
    </ligand>
</feature>
<feature type="binding site" evidence="1">
    <location>
        <position position="183"/>
    </location>
    <ligand>
        <name>substrate</name>
    </ligand>
</feature>
<feature type="binding site" evidence="1">
    <location>
        <position position="187"/>
    </location>
    <ligand>
        <name>substrate</name>
    </ligand>
</feature>
<feature type="binding site" evidence="1">
    <location>
        <position position="278"/>
    </location>
    <ligand>
        <name>substrate</name>
    </ligand>
</feature>
<feature type="binding site" evidence="1">
    <location>
        <position position="306"/>
    </location>
    <ligand>
        <name>Fe cation</name>
        <dbReference type="ChEBI" id="CHEBI:24875"/>
    </ligand>
</feature>
<sequence>MTTVLGIETSCDETGVGIARLDPDGTVTLLADEVASSVDEHVRFGGVVPEIASRAHLEALGPAMRRALAAAGLKQPDIVAATIGPGLAGALLVGVAAAKAYSAAWGVPFYAVNHLGGHLAADVYEHGPLPECVALLVSGGHTHLLHVRSLGEPIIELGSTVDDAAGEAYDKVARLLGLGYPGGKALDDLARTGDRDAIVFPRGMSGPADDRYAFSFSGLKTAVARYVESHAADPGFRTADIAAGFQEAVADVLTMKAVRAATALGVSTLLIAGGVAANSRLRELATQRCGEAGRTLRIPSPRLCTDNGAMIAAFAAQLVAAGAPPSPLDVPSDPGLPVMQGQVR</sequence>
<evidence type="ECO:0000255" key="1">
    <source>
        <dbReference type="HAMAP-Rule" id="MF_01445"/>
    </source>
</evidence>
<evidence type="ECO:0000256" key="2">
    <source>
        <dbReference type="SAM" id="MobiDB-lite"/>
    </source>
</evidence>
<evidence type="ECO:0000269" key="3">
    <source>
    </source>
</evidence>
<keyword id="KW-0012">Acyltransferase</keyword>
<keyword id="KW-0963">Cytoplasm</keyword>
<keyword id="KW-0408">Iron</keyword>
<keyword id="KW-0479">Metal-binding</keyword>
<keyword id="KW-1185">Reference proteome</keyword>
<keyword id="KW-0808">Transferase</keyword>
<keyword id="KW-0819">tRNA processing</keyword>
<reference key="1">
    <citation type="journal article" date="1998" name="Nature">
        <title>Deciphering the biology of Mycobacterium tuberculosis from the complete genome sequence.</title>
        <authorList>
            <person name="Cole S.T."/>
            <person name="Brosch R."/>
            <person name="Parkhill J."/>
            <person name="Garnier T."/>
            <person name="Churcher C.M."/>
            <person name="Harris D.E."/>
            <person name="Gordon S.V."/>
            <person name="Eiglmeier K."/>
            <person name="Gas S."/>
            <person name="Barry C.E. III"/>
            <person name="Tekaia F."/>
            <person name="Badcock K."/>
            <person name="Basham D."/>
            <person name="Brown D."/>
            <person name="Chillingworth T."/>
            <person name="Connor R."/>
            <person name="Davies R.M."/>
            <person name="Devlin K."/>
            <person name="Feltwell T."/>
            <person name="Gentles S."/>
            <person name="Hamlin N."/>
            <person name="Holroyd S."/>
            <person name="Hornsby T."/>
            <person name="Jagels K."/>
            <person name="Krogh A."/>
            <person name="McLean J."/>
            <person name="Moule S."/>
            <person name="Murphy L.D."/>
            <person name="Oliver S."/>
            <person name="Osborne J."/>
            <person name="Quail M.A."/>
            <person name="Rajandream M.A."/>
            <person name="Rogers J."/>
            <person name="Rutter S."/>
            <person name="Seeger K."/>
            <person name="Skelton S."/>
            <person name="Squares S."/>
            <person name="Squares R."/>
            <person name="Sulston J.E."/>
            <person name="Taylor K."/>
            <person name="Whitehead S."/>
            <person name="Barrell B.G."/>
        </authorList>
    </citation>
    <scope>NUCLEOTIDE SEQUENCE [LARGE SCALE GENOMIC DNA]</scope>
    <source>
        <strain>ATCC 25618 / H37Rv</strain>
    </source>
</reference>
<reference key="2">
    <citation type="journal article" date="2011" name="Mol. Cell. Proteomics">
        <title>Proteogenomic analysis of Mycobacterium tuberculosis by high resolution mass spectrometry.</title>
        <authorList>
            <person name="Kelkar D.S."/>
            <person name="Kumar D."/>
            <person name="Kumar P."/>
            <person name="Balakrishnan L."/>
            <person name="Muthusamy B."/>
            <person name="Yadav A.K."/>
            <person name="Shrivastava P."/>
            <person name="Marimuthu A."/>
            <person name="Anand S."/>
            <person name="Sundaram H."/>
            <person name="Kingsbury R."/>
            <person name="Harsha H.C."/>
            <person name="Nair B."/>
            <person name="Prasad T.S."/>
            <person name="Chauhan D.S."/>
            <person name="Katoch K."/>
            <person name="Katoch V.M."/>
            <person name="Kumar P."/>
            <person name="Chaerkady R."/>
            <person name="Ramachandran S."/>
            <person name="Dash D."/>
            <person name="Pandey A."/>
        </authorList>
    </citation>
    <scope>IDENTIFICATION BY MASS SPECTROMETRY [LARGE SCALE ANALYSIS]</scope>
    <source>
        <strain>ATCC 25618 / H37Rv</strain>
    </source>
</reference>
<reference key="3">
    <citation type="journal article" date="2016" name="Sci. Rep.">
        <title>Biochemical evidence for relaxed substrate specificity of Nalpha-acetyltransferase (Rv3420c/rimI) of Mycobacterium tuberculosis.</title>
        <authorList>
            <person name="Pathak D."/>
            <person name="Bhat A.H."/>
            <person name="Sapehia V."/>
            <person name="Rai J."/>
            <person name="Rao A."/>
        </authorList>
    </citation>
    <scope>INTERACTION WITH RIMI</scope>
</reference>
<proteinExistence type="evidence at protein level"/>
<gene>
    <name evidence="1" type="primary">tsaD</name>
    <name type="synonym">gcp</name>
    <name type="ordered locus">Rv3419c</name>
    <name type="ORF">MTCY78.10</name>
</gene>
<organism>
    <name type="scientific">Mycobacterium tuberculosis (strain ATCC 25618 / H37Rv)</name>
    <dbReference type="NCBI Taxonomy" id="83332"/>
    <lineage>
        <taxon>Bacteria</taxon>
        <taxon>Bacillati</taxon>
        <taxon>Actinomycetota</taxon>
        <taxon>Actinomycetes</taxon>
        <taxon>Mycobacteriales</taxon>
        <taxon>Mycobacteriaceae</taxon>
        <taxon>Mycobacterium</taxon>
        <taxon>Mycobacterium tuberculosis complex</taxon>
    </lineage>
</organism>